<feature type="chain" id="PRO_1000059787" description="ATP-dependent 6-phosphofructokinase">
    <location>
        <begin position="1"/>
        <end position="320"/>
    </location>
</feature>
<feature type="active site" description="Proton acceptor" evidence="1">
    <location>
        <position position="128"/>
    </location>
</feature>
<feature type="binding site" evidence="1">
    <location>
        <position position="12"/>
    </location>
    <ligand>
        <name>ATP</name>
        <dbReference type="ChEBI" id="CHEBI:30616"/>
    </ligand>
</feature>
<feature type="binding site" evidence="1">
    <location>
        <begin position="22"/>
        <end position="26"/>
    </location>
    <ligand>
        <name>ADP</name>
        <dbReference type="ChEBI" id="CHEBI:456216"/>
        <note>allosteric activator; ligand shared between dimeric partners</note>
    </ligand>
</feature>
<feature type="binding site" evidence="1">
    <location>
        <begin position="55"/>
        <end position="60"/>
    </location>
    <ligand>
        <name>ADP</name>
        <dbReference type="ChEBI" id="CHEBI:456216"/>
        <note>allosteric activator; ligand shared between dimeric partners</note>
    </ligand>
</feature>
<feature type="binding site" evidence="1">
    <location>
        <begin position="73"/>
        <end position="74"/>
    </location>
    <ligand>
        <name>ATP</name>
        <dbReference type="ChEBI" id="CHEBI:30616"/>
    </ligand>
</feature>
<feature type="binding site" evidence="1">
    <location>
        <begin position="103"/>
        <end position="106"/>
    </location>
    <ligand>
        <name>ATP</name>
        <dbReference type="ChEBI" id="CHEBI:30616"/>
    </ligand>
</feature>
<feature type="binding site" evidence="1">
    <location>
        <position position="104"/>
    </location>
    <ligand>
        <name>Mg(2+)</name>
        <dbReference type="ChEBI" id="CHEBI:18420"/>
        <note>catalytic</note>
    </ligand>
</feature>
<feature type="binding site" description="in other chain" evidence="1">
    <location>
        <begin position="126"/>
        <end position="128"/>
    </location>
    <ligand>
        <name>substrate</name>
        <note>ligand shared between dimeric partners</note>
    </ligand>
</feature>
<feature type="binding site" description="in other chain" evidence="1">
    <location>
        <position position="155"/>
    </location>
    <ligand>
        <name>ADP</name>
        <dbReference type="ChEBI" id="CHEBI:456216"/>
        <note>allosteric activator; ligand shared between dimeric partners</note>
    </ligand>
</feature>
<feature type="binding site" evidence="1">
    <location>
        <position position="163"/>
    </location>
    <ligand>
        <name>substrate</name>
        <note>ligand shared between dimeric partners</note>
    </ligand>
</feature>
<feature type="binding site" description="in other chain" evidence="1">
    <location>
        <begin position="170"/>
        <end position="172"/>
    </location>
    <ligand>
        <name>substrate</name>
        <note>ligand shared between dimeric partners</note>
    </ligand>
</feature>
<feature type="binding site" description="in other chain" evidence="1">
    <location>
        <begin position="186"/>
        <end position="188"/>
    </location>
    <ligand>
        <name>ADP</name>
        <dbReference type="ChEBI" id="CHEBI:456216"/>
        <note>allosteric activator; ligand shared between dimeric partners</note>
    </ligand>
</feature>
<feature type="binding site" description="in other chain" evidence="1">
    <location>
        <position position="212"/>
    </location>
    <ligand>
        <name>ADP</name>
        <dbReference type="ChEBI" id="CHEBI:456216"/>
        <note>allosteric activator; ligand shared between dimeric partners</note>
    </ligand>
</feature>
<feature type="binding site" description="in other chain" evidence="1">
    <location>
        <begin position="214"/>
        <end position="216"/>
    </location>
    <ligand>
        <name>ADP</name>
        <dbReference type="ChEBI" id="CHEBI:456216"/>
        <note>allosteric activator; ligand shared between dimeric partners</note>
    </ligand>
</feature>
<feature type="binding site" description="in other chain" evidence="1">
    <location>
        <position position="223"/>
    </location>
    <ligand>
        <name>substrate</name>
        <note>ligand shared between dimeric partners</note>
    </ligand>
</feature>
<feature type="binding site" evidence="1">
    <location>
        <position position="244"/>
    </location>
    <ligand>
        <name>substrate</name>
        <note>ligand shared between dimeric partners</note>
    </ligand>
</feature>
<feature type="binding site" description="in other chain" evidence="1">
    <location>
        <begin position="250"/>
        <end position="253"/>
    </location>
    <ligand>
        <name>substrate</name>
        <note>ligand shared between dimeric partners</note>
    </ligand>
</feature>
<gene>
    <name evidence="1" type="primary">pfkA</name>
    <name type="ordered locus">Spro_4807</name>
</gene>
<accession>A8GLB0</accession>
<reference key="1">
    <citation type="submission" date="2007-09" db="EMBL/GenBank/DDBJ databases">
        <title>Complete sequence of chromosome of Serratia proteamaculans 568.</title>
        <authorList>
            <consortium name="US DOE Joint Genome Institute"/>
            <person name="Copeland A."/>
            <person name="Lucas S."/>
            <person name="Lapidus A."/>
            <person name="Barry K."/>
            <person name="Glavina del Rio T."/>
            <person name="Dalin E."/>
            <person name="Tice H."/>
            <person name="Pitluck S."/>
            <person name="Chain P."/>
            <person name="Malfatti S."/>
            <person name="Shin M."/>
            <person name="Vergez L."/>
            <person name="Schmutz J."/>
            <person name="Larimer F."/>
            <person name="Land M."/>
            <person name="Hauser L."/>
            <person name="Kyrpides N."/>
            <person name="Kim E."/>
            <person name="Taghavi S."/>
            <person name="Newman L."/>
            <person name="Vangronsveld J."/>
            <person name="van der Lelie D."/>
            <person name="Richardson P."/>
        </authorList>
    </citation>
    <scope>NUCLEOTIDE SEQUENCE [LARGE SCALE GENOMIC DNA]</scope>
    <source>
        <strain>568</strain>
    </source>
</reference>
<comment type="function">
    <text evidence="1">Catalyzes the phosphorylation of D-fructose 6-phosphate to fructose 1,6-bisphosphate by ATP, the first committing step of glycolysis.</text>
</comment>
<comment type="catalytic activity">
    <reaction evidence="1">
        <text>beta-D-fructose 6-phosphate + ATP = beta-D-fructose 1,6-bisphosphate + ADP + H(+)</text>
        <dbReference type="Rhea" id="RHEA:16109"/>
        <dbReference type="ChEBI" id="CHEBI:15378"/>
        <dbReference type="ChEBI" id="CHEBI:30616"/>
        <dbReference type="ChEBI" id="CHEBI:32966"/>
        <dbReference type="ChEBI" id="CHEBI:57634"/>
        <dbReference type="ChEBI" id="CHEBI:456216"/>
        <dbReference type="EC" id="2.7.1.11"/>
    </reaction>
</comment>
<comment type="cofactor">
    <cofactor evidence="1">
        <name>Mg(2+)</name>
        <dbReference type="ChEBI" id="CHEBI:18420"/>
    </cofactor>
</comment>
<comment type="activity regulation">
    <text evidence="1">Allosterically activated by ADP and other diphosphonucleosides, and allosterically inhibited by phosphoenolpyruvate.</text>
</comment>
<comment type="pathway">
    <text evidence="1">Carbohydrate degradation; glycolysis; D-glyceraldehyde 3-phosphate and glycerone phosphate from D-glucose: step 3/4.</text>
</comment>
<comment type="subunit">
    <text evidence="1">Homotetramer.</text>
</comment>
<comment type="subcellular location">
    <subcellularLocation>
        <location evidence="1">Cytoplasm</location>
    </subcellularLocation>
</comment>
<comment type="similarity">
    <text evidence="1">Belongs to the phosphofructokinase type A (PFKA) family. ATP-dependent PFK group I subfamily. Prokaryotic clade 'B1' sub-subfamily.</text>
</comment>
<protein>
    <recommendedName>
        <fullName evidence="1">ATP-dependent 6-phosphofructokinase</fullName>
        <shortName evidence="1">ATP-PFK</shortName>
        <shortName evidence="1">Phosphofructokinase</shortName>
        <ecNumber evidence="1">2.7.1.11</ecNumber>
    </recommendedName>
    <alternativeName>
        <fullName evidence="1">Phosphohexokinase</fullName>
    </alternativeName>
</protein>
<sequence length="320" mass="35067">MIKKIGVLTSGGDSPGMNAAIRGVVRAALSEGLEVFGIYDGYLGLYEDRMEKLDRYSVSDMINRGGTFLGSARFPEFRDDSVRAKAIENLQNRGIDALVVIGGDGSYMGAKRLTEEGFPCIGLPGTIDNDVAGTDYTIGFFTALETVVEAIDRLRDTSSSHQRISIVEVMGRYCGDLTLAAAIAGGCEFIVLPEIEFNREDLVCEIKAGIDKGKKHAIVAITEHICDIDELARHIEQETKRETRATVLGHIQRGGSPVAYDRILASRMGAYAIELLLQGYGGRCVGIQNEKMVHHDIIDAIENMKRPFKGDWLETAKKLY</sequence>
<dbReference type="EC" id="2.7.1.11" evidence="1"/>
<dbReference type="EMBL" id="CP000826">
    <property type="protein sequence ID" value="ABV43900.1"/>
    <property type="molecule type" value="Genomic_DNA"/>
</dbReference>
<dbReference type="SMR" id="A8GLB0"/>
<dbReference type="STRING" id="399741.Spro_4807"/>
<dbReference type="KEGG" id="spe:Spro_4807"/>
<dbReference type="eggNOG" id="COG0205">
    <property type="taxonomic scope" value="Bacteria"/>
</dbReference>
<dbReference type="HOGENOM" id="CLU_020655_0_1_6"/>
<dbReference type="OrthoDB" id="9802503at2"/>
<dbReference type="UniPathway" id="UPA00109">
    <property type="reaction ID" value="UER00182"/>
</dbReference>
<dbReference type="GO" id="GO:0005945">
    <property type="term" value="C:6-phosphofructokinase complex"/>
    <property type="evidence" value="ECO:0007669"/>
    <property type="project" value="TreeGrafter"/>
</dbReference>
<dbReference type="GO" id="GO:0003872">
    <property type="term" value="F:6-phosphofructokinase activity"/>
    <property type="evidence" value="ECO:0007669"/>
    <property type="project" value="UniProtKB-UniRule"/>
</dbReference>
<dbReference type="GO" id="GO:0016208">
    <property type="term" value="F:AMP binding"/>
    <property type="evidence" value="ECO:0007669"/>
    <property type="project" value="TreeGrafter"/>
</dbReference>
<dbReference type="GO" id="GO:0005524">
    <property type="term" value="F:ATP binding"/>
    <property type="evidence" value="ECO:0007669"/>
    <property type="project" value="UniProtKB-KW"/>
</dbReference>
<dbReference type="GO" id="GO:0070095">
    <property type="term" value="F:fructose-6-phosphate binding"/>
    <property type="evidence" value="ECO:0007669"/>
    <property type="project" value="TreeGrafter"/>
</dbReference>
<dbReference type="GO" id="GO:0042802">
    <property type="term" value="F:identical protein binding"/>
    <property type="evidence" value="ECO:0007669"/>
    <property type="project" value="TreeGrafter"/>
</dbReference>
<dbReference type="GO" id="GO:0046872">
    <property type="term" value="F:metal ion binding"/>
    <property type="evidence" value="ECO:0007669"/>
    <property type="project" value="UniProtKB-KW"/>
</dbReference>
<dbReference type="GO" id="GO:0048029">
    <property type="term" value="F:monosaccharide binding"/>
    <property type="evidence" value="ECO:0007669"/>
    <property type="project" value="TreeGrafter"/>
</dbReference>
<dbReference type="GO" id="GO:0061621">
    <property type="term" value="P:canonical glycolysis"/>
    <property type="evidence" value="ECO:0007669"/>
    <property type="project" value="TreeGrafter"/>
</dbReference>
<dbReference type="GO" id="GO:0030388">
    <property type="term" value="P:fructose 1,6-bisphosphate metabolic process"/>
    <property type="evidence" value="ECO:0007669"/>
    <property type="project" value="TreeGrafter"/>
</dbReference>
<dbReference type="GO" id="GO:0006002">
    <property type="term" value="P:fructose 6-phosphate metabolic process"/>
    <property type="evidence" value="ECO:0007669"/>
    <property type="project" value="InterPro"/>
</dbReference>
<dbReference type="CDD" id="cd00763">
    <property type="entry name" value="Bacterial_PFK"/>
    <property type="match status" value="1"/>
</dbReference>
<dbReference type="FunFam" id="3.40.50.450:FF:000001">
    <property type="entry name" value="ATP-dependent 6-phosphofructokinase"/>
    <property type="match status" value="1"/>
</dbReference>
<dbReference type="FunFam" id="3.40.50.460:FF:000002">
    <property type="entry name" value="ATP-dependent 6-phosphofructokinase"/>
    <property type="match status" value="1"/>
</dbReference>
<dbReference type="Gene3D" id="3.40.50.450">
    <property type="match status" value="1"/>
</dbReference>
<dbReference type="Gene3D" id="3.40.50.460">
    <property type="entry name" value="Phosphofructokinase domain"/>
    <property type="match status" value="1"/>
</dbReference>
<dbReference type="HAMAP" id="MF_00339">
    <property type="entry name" value="Phosphofructokinase_I_B1"/>
    <property type="match status" value="1"/>
</dbReference>
<dbReference type="InterPro" id="IPR022953">
    <property type="entry name" value="ATP_PFK"/>
</dbReference>
<dbReference type="InterPro" id="IPR012003">
    <property type="entry name" value="ATP_PFK_prok-type"/>
</dbReference>
<dbReference type="InterPro" id="IPR012828">
    <property type="entry name" value="PFKA_ATP_prok"/>
</dbReference>
<dbReference type="InterPro" id="IPR015912">
    <property type="entry name" value="Phosphofructokinase_CS"/>
</dbReference>
<dbReference type="InterPro" id="IPR000023">
    <property type="entry name" value="Phosphofructokinase_dom"/>
</dbReference>
<dbReference type="InterPro" id="IPR035966">
    <property type="entry name" value="PKF_sf"/>
</dbReference>
<dbReference type="NCBIfam" id="TIGR02482">
    <property type="entry name" value="PFKA_ATP"/>
    <property type="match status" value="1"/>
</dbReference>
<dbReference type="NCBIfam" id="NF002872">
    <property type="entry name" value="PRK03202.1"/>
    <property type="match status" value="1"/>
</dbReference>
<dbReference type="PANTHER" id="PTHR13697:SF4">
    <property type="entry name" value="ATP-DEPENDENT 6-PHOSPHOFRUCTOKINASE"/>
    <property type="match status" value="1"/>
</dbReference>
<dbReference type="PANTHER" id="PTHR13697">
    <property type="entry name" value="PHOSPHOFRUCTOKINASE"/>
    <property type="match status" value="1"/>
</dbReference>
<dbReference type="Pfam" id="PF00365">
    <property type="entry name" value="PFK"/>
    <property type="match status" value="1"/>
</dbReference>
<dbReference type="PIRSF" id="PIRSF000532">
    <property type="entry name" value="ATP_PFK_prok"/>
    <property type="match status" value="1"/>
</dbReference>
<dbReference type="PRINTS" id="PR00476">
    <property type="entry name" value="PHFRCTKINASE"/>
</dbReference>
<dbReference type="SUPFAM" id="SSF53784">
    <property type="entry name" value="Phosphofructokinase"/>
    <property type="match status" value="1"/>
</dbReference>
<dbReference type="PROSITE" id="PS00433">
    <property type="entry name" value="PHOSPHOFRUCTOKINASE"/>
    <property type="match status" value="1"/>
</dbReference>
<evidence type="ECO:0000255" key="1">
    <source>
        <dbReference type="HAMAP-Rule" id="MF_00339"/>
    </source>
</evidence>
<keyword id="KW-0021">Allosteric enzyme</keyword>
<keyword id="KW-0067">ATP-binding</keyword>
<keyword id="KW-0963">Cytoplasm</keyword>
<keyword id="KW-0324">Glycolysis</keyword>
<keyword id="KW-0418">Kinase</keyword>
<keyword id="KW-0460">Magnesium</keyword>
<keyword id="KW-0479">Metal-binding</keyword>
<keyword id="KW-0547">Nucleotide-binding</keyword>
<keyword id="KW-0808">Transferase</keyword>
<name>PFKA_SERP5</name>
<proteinExistence type="inferred from homology"/>
<organism>
    <name type="scientific">Serratia proteamaculans (strain 568)</name>
    <dbReference type="NCBI Taxonomy" id="399741"/>
    <lineage>
        <taxon>Bacteria</taxon>
        <taxon>Pseudomonadati</taxon>
        <taxon>Pseudomonadota</taxon>
        <taxon>Gammaproteobacteria</taxon>
        <taxon>Enterobacterales</taxon>
        <taxon>Yersiniaceae</taxon>
        <taxon>Serratia</taxon>
    </lineage>
</organism>